<reference key="1">
    <citation type="journal article" date="2006" name="Genome Biol.">
        <title>Genomic analysis reveals that Pseudomonas aeruginosa virulence is combinatorial.</title>
        <authorList>
            <person name="Lee D.G."/>
            <person name="Urbach J.M."/>
            <person name="Wu G."/>
            <person name="Liberati N.T."/>
            <person name="Feinbaum R.L."/>
            <person name="Miyata S."/>
            <person name="Diggins L.T."/>
            <person name="He J."/>
            <person name="Saucier M."/>
            <person name="Deziel E."/>
            <person name="Friedman L."/>
            <person name="Li L."/>
            <person name="Grills G."/>
            <person name="Montgomery K."/>
            <person name="Kucherlapati R."/>
            <person name="Rahme L.G."/>
            <person name="Ausubel F.M."/>
        </authorList>
    </citation>
    <scope>NUCLEOTIDE SEQUENCE [LARGE SCALE GENOMIC DNA]</scope>
    <source>
        <strain>UCBPP-PA14</strain>
    </source>
</reference>
<reference key="2">
    <citation type="journal article" date="2016" name="Proc. Natl. Acad. Sci. U.S.A.">
        <title>SutA is a bacterial transcription factor expressed during slow growth in Pseudomonas aeruginosa.</title>
        <authorList>
            <person name="Babin B.M."/>
            <person name="Bergkessel M."/>
            <person name="Sweredoski M.J."/>
            <person name="Moradian A."/>
            <person name="Hess S."/>
            <person name="Newman D.K."/>
            <person name="Tirrell D.A."/>
        </authorList>
    </citation>
    <scope>IDENTIFICATION BY MASS SPECTROMETRY</scope>
    <scope>FUNCTION</scope>
    <scope>INTERACTION WITH RNAP</scope>
    <scope>INDUCTION</scope>
    <scope>DISRUPTION PHENOTYPE</scope>
    <source>
        <strain>UCBPP-PA14</strain>
    </source>
</reference>
<comment type="function">
    <text evidence="2">Causes widespread changes in gene expression, and plays a direct role in the regulation of genes encoding ribosomal components. Associates with chromosomal DNA through interaction with RNA polymerase. Contributes to biofilm formation and secondary metabolite production. Important during transitions to and from the survival state.</text>
</comment>
<comment type="subunit">
    <text evidence="2">Interacts with RNA polymerase.</text>
</comment>
<comment type="induction">
    <text evidence="2">Up-regulated at post-transcriptional level during survival and slow-growth conditions.</text>
</comment>
<comment type="disruption phenotype">
    <text evidence="2">Deletion mutant forms smaller biofilms, and produces more pyocyanine and less phenazine-1-carboxylic acid (PCA) than the wild-type. Affects expression of many genes and impacts fitness in fluctuating conditions.</text>
</comment>
<feature type="chain" id="PRO_0000438366" description="Transcriptional regulator SutA">
    <location>
        <begin position="1"/>
        <end position="105"/>
    </location>
</feature>
<feature type="region of interest" description="Disordered" evidence="1">
    <location>
        <begin position="1"/>
        <end position="105"/>
    </location>
</feature>
<feature type="compositionally biased region" description="Acidic residues" evidence="1">
    <location>
        <begin position="1"/>
        <end position="37"/>
    </location>
</feature>
<feature type="compositionally biased region" description="Basic and acidic residues" evidence="1">
    <location>
        <begin position="59"/>
        <end position="83"/>
    </location>
</feature>
<feature type="compositionally biased region" description="Basic and acidic residues" evidence="1">
    <location>
        <begin position="92"/>
        <end position="105"/>
    </location>
</feature>
<evidence type="ECO:0000256" key="1">
    <source>
        <dbReference type="SAM" id="MobiDB-lite"/>
    </source>
</evidence>
<evidence type="ECO:0000269" key="2">
    <source>
    </source>
</evidence>
<evidence type="ECO:0000303" key="3">
    <source>
    </source>
</evidence>
<evidence type="ECO:0000305" key="4"/>
<evidence type="ECO:0000312" key="5">
    <source>
        <dbReference type="EMBL" id="ABJ14670.1"/>
    </source>
</evidence>
<protein>
    <recommendedName>
        <fullName evidence="4">Transcriptional regulator SutA</fullName>
    </recommendedName>
    <alternativeName>
        <fullName evidence="3">Survival under transitions A</fullName>
    </alternativeName>
</protein>
<gene>
    <name evidence="3" type="primary">sutA</name>
    <name evidence="5" type="ordered locus">PA14_69770</name>
</gene>
<organism>
    <name type="scientific">Pseudomonas aeruginosa (strain UCBPP-PA14)</name>
    <dbReference type="NCBI Taxonomy" id="208963"/>
    <lineage>
        <taxon>Bacteria</taxon>
        <taxon>Pseudomonadati</taxon>
        <taxon>Pseudomonadota</taxon>
        <taxon>Gammaproteobacteria</taxon>
        <taxon>Pseudomonadales</taxon>
        <taxon>Pseudomonadaceae</taxon>
        <taxon>Pseudomonas</taxon>
    </lineage>
</organism>
<name>SUTA_PSEAB</name>
<sequence>MSEEELEQDELDGADEDDGEELAAADDGEADSSDGDEAPAPGKKAKAAVVEEELPSVEAKQKERDALAKAMEEFLSRGGKVQEIEPNVVADPPKKPDSKYGSRPI</sequence>
<keyword id="KW-0346">Stress response</keyword>
<keyword id="KW-0804">Transcription</keyword>
<keyword id="KW-0805">Transcription regulation</keyword>
<proteinExistence type="evidence at protein level"/>
<dbReference type="EMBL" id="CP000438">
    <property type="protein sequence ID" value="ABJ14670.1"/>
    <property type="molecule type" value="Genomic_DNA"/>
</dbReference>
<dbReference type="RefSeq" id="WP_003096440.1">
    <property type="nucleotide sequence ID" value="NZ_CP034244.1"/>
</dbReference>
<dbReference type="SMR" id="A0A0H2ZJC1"/>
<dbReference type="KEGG" id="pau:PA14_69770"/>
<dbReference type="HOGENOM" id="CLU_169698_0_0_6"/>
<dbReference type="BioCyc" id="PAER208963:G1G74-5879-MONOMER"/>
<dbReference type="Proteomes" id="UP000000653">
    <property type="component" value="Chromosome"/>
</dbReference>
<dbReference type="GO" id="GO:0045893">
    <property type="term" value="P:positive regulation of DNA-templated transcription"/>
    <property type="evidence" value="ECO:0000314"/>
    <property type="project" value="DisProt"/>
</dbReference>
<dbReference type="InterPro" id="IPR048080">
    <property type="entry name" value="SutA"/>
</dbReference>
<dbReference type="InterPro" id="IPR049191">
    <property type="entry name" value="SutA_RBD"/>
</dbReference>
<dbReference type="NCBIfam" id="NF041490">
    <property type="entry name" value="trans_reg_SutA"/>
    <property type="match status" value="1"/>
</dbReference>
<dbReference type="Pfam" id="PF20661">
    <property type="entry name" value="SutA-RBD"/>
    <property type="match status" value="1"/>
</dbReference>
<accession>A0A0H2ZJC1</accession>